<sequence>MATTLYTNKVWCVYILRQDNGKLYTGITSNLNRRIKQHSNKQGAKCLRNATNLRLVYHSASAYDYNTAARMEYNLKRKCSKYFKLRLIKAKPLLLHKFLLANKL</sequence>
<evidence type="ECO:0000255" key="1">
    <source>
        <dbReference type="PROSITE-ProRule" id="PRU00977"/>
    </source>
</evidence>
<evidence type="ECO:0000305" key="2"/>
<accession>Q06692</accession>
<organism>
    <name type="scientific">Autographa californica nuclear polyhedrosis virus</name>
    <name type="common">AcMNPV</name>
    <dbReference type="NCBI Taxonomy" id="46015"/>
    <lineage>
        <taxon>Viruses</taxon>
        <taxon>Viruses incertae sedis</taxon>
        <taxon>Naldaviricetes</taxon>
        <taxon>Lefavirales</taxon>
        <taxon>Baculoviridae</taxon>
        <taxon>Alphabaculovirus</taxon>
        <taxon>Alphabaculovirus aucalifornicae</taxon>
    </lineage>
</organism>
<reference key="1">
    <citation type="journal article" date="1994" name="Virology">
        <title>The complete DNA sequence of Autographa californica nuclear polyhedrosis virus.</title>
        <authorList>
            <person name="Ayres M.D."/>
            <person name="Howard S.C."/>
            <person name="Kuzio J."/>
            <person name="Lopez-Ferber M."/>
            <person name="Possee R.D."/>
        </authorList>
    </citation>
    <scope>NUCLEOTIDE SEQUENCE [LARGE SCALE GENOMIC DNA]</scope>
    <source>
        <strain>C6</strain>
    </source>
</reference>
<reference key="2">
    <citation type="journal article" date="1994" name="J. Gen. Virol.">
        <title>Nucleotide sequence and genetic organization of a 7.3 kb region (map unit 47 to 52.5) of Autographa californica nuclear polyhedrosis virus fragment EcoRI-C.</title>
        <authorList>
            <person name="Kool M."/>
            <person name="Broer R."/>
            <person name="Zuidema D."/>
            <person name="Goldbach R.W."/>
            <person name="Vlak J.M."/>
        </authorList>
    </citation>
    <scope>NUCLEOTIDE SEQUENCE [GENOMIC DNA]</scope>
    <source>
        <strain>E2</strain>
    </source>
</reference>
<feature type="chain" id="PRO_0000161404" description="UPF0213 protein in VLF1-GP41 intergenic region">
    <location>
        <begin position="1"/>
        <end position="104"/>
    </location>
</feature>
<feature type="domain" description="GIY-YIG" evidence="1">
    <location>
        <begin position="9"/>
        <end position="89"/>
    </location>
</feature>
<feature type="sequence conflict" description="In Ref. 2; CAA50542." evidence="2" ref="2">
    <original>N</original>
    <variation>K</variation>
    <location>
        <position position="66"/>
    </location>
</feature>
<keyword id="KW-1185">Reference proteome</keyword>
<comment type="similarity">
    <text evidence="2">Belongs to the UPF0213 family.</text>
</comment>
<organismHost>
    <name type="scientific">Lepidoptera</name>
    <name type="common">butterflies and moths</name>
    <dbReference type="NCBI Taxonomy" id="7088"/>
</organismHost>
<protein>
    <recommendedName>
        <fullName>UPF0213 protein in VLF1-GP41 intergenic region</fullName>
    </recommendedName>
</protein>
<name>Y079_NPVAC</name>
<dbReference type="EMBL" id="L22858">
    <property type="protein sequence ID" value="AAA66709.1"/>
    <property type="molecule type" value="Genomic_DNA"/>
</dbReference>
<dbReference type="EMBL" id="X71415">
    <property type="protein sequence ID" value="CAA50542.1"/>
    <property type="molecule type" value="Genomic_DNA"/>
</dbReference>
<dbReference type="PIR" id="H72859">
    <property type="entry name" value="H72859"/>
</dbReference>
<dbReference type="RefSeq" id="NP_054109.1">
    <property type="nucleotide sequence ID" value="NC_001623.1"/>
</dbReference>
<dbReference type="SMR" id="Q06692"/>
<dbReference type="GeneID" id="1403912"/>
<dbReference type="KEGG" id="vg:1403912"/>
<dbReference type="OrthoDB" id="27013at10239"/>
<dbReference type="Proteomes" id="UP000008292">
    <property type="component" value="Segment"/>
</dbReference>
<dbReference type="CDD" id="cd10456">
    <property type="entry name" value="GIY-YIG_UPF0213"/>
    <property type="match status" value="1"/>
</dbReference>
<dbReference type="Gene3D" id="3.40.1440.10">
    <property type="entry name" value="GIY-YIG endonuclease"/>
    <property type="match status" value="1"/>
</dbReference>
<dbReference type="InterPro" id="IPR000305">
    <property type="entry name" value="GIY-YIG_endonuc"/>
</dbReference>
<dbReference type="InterPro" id="IPR035901">
    <property type="entry name" value="GIY-YIG_endonuc_sf"/>
</dbReference>
<dbReference type="InterPro" id="IPR050190">
    <property type="entry name" value="UPF0213_domain"/>
</dbReference>
<dbReference type="PANTHER" id="PTHR34477">
    <property type="entry name" value="UPF0213 PROTEIN YHBQ"/>
    <property type="match status" value="1"/>
</dbReference>
<dbReference type="PANTHER" id="PTHR34477:SF1">
    <property type="entry name" value="UPF0213 PROTEIN YHBQ"/>
    <property type="match status" value="1"/>
</dbReference>
<dbReference type="Pfam" id="PF01541">
    <property type="entry name" value="GIY-YIG"/>
    <property type="match status" value="1"/>
</dbReference>
<dbReference type="SMART" id="SM00465">
    <property type="entry name" value="GIYc"/>
    <property type="match status" value="1"/>
</dbReference>
<dbReference type="SUPFAM" id="SSF82771">
    <property type="entry name" value="GIY-YIG endonuclease"/>
    <property type="match status" value="1"/>
</dbReference>
<dbReference type="PROSITE" id="PS50164">
    <property type="entry name" value="GIY_YIG"/>
    <property type="match status" value="1"/>
</dbReference>
<proteinExistence type="inferred from homology"/>